<dbReference type="EMBL" id="BA000016">
    <property type="protein sequence ID" value="BAB82363.1"/>
    <property type="molecule type" value="Genomic_DNA"/>
</dbReference>
<dbReference type="RefSeq" id="WP_003466097.1">
    <property type="nucleotide sequence ID" value="NC_003366.1"/>
</dbReference>
<dbReference type="SMR" id="Q8XH28"/>
<dbReference type="STRING" id="195102.gene:10492001"/>
<dbReference type="KEGG" id="cpe:CPE2657"/>
<dbReference type="HOGENOM" id="CLU_036138_4_1_9"/>
<dbReference type="Proteomes" id="UP000000818">
    <property type="component" value="Chromosome"/>
</dbReference>
<dbReference type="GO" id="GO:0005886">
    <property type="term" value="C:plasma membrane"/>
    <property type="evidence" value="ECO:0007669"/>
    <property type="project" value="UniProtKB-SubCell"/>
</dbReference>
<dbReference type="GO" id="GO:0032977">
    <property type="term" value="F:membrane insertase activity"/>
    <property type="evidence" value="ECO:0007669"/>
    <property type="project" value="InterPro"/>
</dbReference>
<dbReference type="GO" id="GO:0051205">
    <property type="term" value="P:protein insertion into membrane"/>
    <property type="evidence" value="ECO:0007669"/>
    <property type="project" value="TreeGrafter"/>
</dbReference>
<dbReference type="GO" id="GO:0015031">
    <property type="term" value="P:protein transport"/>
    <property type="evidence" value="ECO:0007669"/>
    <property type="project" value="UniProtKB-KW"/>
</dbReference>
<dbReference type="CDD" id="cd20070">
    <property type="entry name" value="5TM_YidC_Alb3"/>
    <property type="match status" value="1"/>
</dbReference>
<dbReference type="InterPro" id="IPR001708">
    <property type="entry name" value="YidC/ALB3/OXA1/COX18"/>
</dbReference>
<dbReference type="InterPro" id="IPR028055">
    <property type="entry name" value="YidC/Oxa/ALB_C"/>
</dbReference>
<dbReference type="InterPro" id="IPR047196">
    <property type="entry name" value="YidC_ALB_C"/>
</dbReference>
<dbReference type="NCBIfam" id="TIGR03592">
    <property type="entry name" value="yidC_oxa1_cterm"/>
    <property type="match status" value="1"/>
</dbReference>
<dbReference type="PANTHER" id="PTHR12428:SF65">
    <property type="entry name" value="CYTOCHROME C OXIDASE ASSEMBLY PROTEIN COX18, MITOCHONDRIAL"/>
    <property type="match status" value="1"/>
</dbReference>
<dbReference type="PANTHER" id="PTHR12428">
    <property type="entry name" value="OXA1"/>
    <property type="match status" value="1"/>
</dbReference>
<dbReference type="Pfam" id="PF02096">
    <property type="entry name" value="60KD_IMP"/>
    <property type="match status" value="1"/>
</dbReference>
<dbReference type="PRINTS" id="PR00701">
    <property type="entry name" value="60KDINNERMP"/>
</dbReference>
<reference key="1">
    <citation type="journal article" date="2002" name="Proc. Natl. Acad. Sci. U.S.A.">
        <title>Complete genome sequence of Clostridium perfringens, an anaerobic flesh-eater.</title>
        <authorList>
            <person name="Shimizu T."/>
            <person name="Ohtani K."/>
            <person name="Hirakawa H."/>
            <person name="Ohshima K."/>
            <person name="Yamashita A."/>
            <person name="Shiba T."/>
            <person name="Ogasawara N."/>
            <person name="Hattori M."/>
            <person name="Kuhara S."/>
            <person name="Hayashi H."/>
        </authorList>
    </citation>
    <scope>NUCLEOTIDE SEQUENCE [LARGE SCALE GENOMIC DNA]</scope>
    <source>
        <strain>13 / Type A</strain>
    </source>
</reference>
<proteinExistence type="inferred from homology"/>
<protein>
    <recommendedName>
        <fullName>Membrane protein insertase YidC</fullName>
    </recommendedName>
    <alternativeName>
        <fullName>Foldase YidC</fullName>
    </alternativeName>
    <alternativeName>
        <fullName>Membrane integrase YidC</fullName>
    </alternativeName>
    <alternativeName>
        <fullName>Membrane protein YidC</fullName>
    </alternativeName>
</protein>
<name>YIDC_CLOPE</name>
<accession>Q8XH28</accession>
<feature type="chain" id="PRO_0000124778" description="Membrane protein insertase YidC">
    <location>
        <begin position="1"/>
        <end position="238"/>
    </location>
</feature>
<feature type="transmembrane region" description="Helical" evidence="2">
    <location>
        <begin position="4"/>
        <end position="24"/>
    </location>
</feature>
<feature type="transmembrane region" description="Helical" evidence="2">
    <location>
        <begin position="26"/>
        <end position="46"/>
    </location>
</feature>
<feature type="transmembrane region" description="Helical" evidence="2">
    <location>
        <begin position="104"/>
        <end position="124"/>
    </location>
</feature>
<feature type="transmembrane region" description="Helical" evidence="2">
    <location>
        <begin position="145"/>
        <end position="165"/>
    </location>
</feature>
<feature type="transmembrane region" description="Helical" evidence="2">
    <location>
        <begin position="175"/>
        <end position="195"/>
    </location>
</feature>
<feature type="transmembrane region" description="Helical" evidence="2">
    <location>
        <begin position="201"/>
        <end position="221"/>
    </location>
</feature>
<organism>
    <name type="scientific">Clostridium perfringens (strain 13 / Type A)</name>
    <dbReference type="NCBI Taxonomy" id="195102"/>
    <lineage>
        <taxon>Bacteria</taxon>
        <taxon>Bacillati</taxon>
        <taxon>Bacillota</taxon>
        <taxon>Clostridia</taxon>
        <taxon>Eubacteriales</taxon>
        <taxon>Clostridiaceae</taxon>
        <taxon>Clostridium</taxon>
    </lineage>
</organism>
<sequence length="238" mass="26931">MQSILKPITNLFTMIFQAIHGFVASLDIFGVGAGYVITIFLLTLLVRLILLPLNIKQTRSQQKMQEIQPEIAKLQKKYKNNPEKAQQEMMKLYKENNVNPMSGCLPLLIQMPILFALYYVFTGLTELQGVSFLWLGDLWAPDRTFILPILSAATTYLSSLLMTKFTQSQAGGAPGGMNMNTMNIVMAGMMGVMSIQFPSMLVLYWVIGNLIQMVQTYFIVVLPSKKRAKEKEQYKDIK</sequence>
<gene>
    <name type="primary">yidC</name>
    <name type="ordered locus">CPE2657</name>
</gene>
<keyword id="KW-1003">Cell membrane</keyword>
<keyword id="KW-0143">Chaperone</keyword>
<keyword id="KW-0472">Membrane</keyword>
<keyword id="KW-0653">Protein transport</keyword>
<keyword id="KW-1185">Reference proteome</keyword>
<keyword id="KW-0812">Transmembrane</keyword>
<keyword id="KW-1133">Transmembrane helix</keyword>
<keyword id="KW-0813">Transport</keyword>
<evidence type="ECO:0000250" key="1"/>
<evidence type="ECO:0000255" key="2"/>
<evidence type="ECO:0000305" key="3"/>
<comment type="function">
    <text evidence="1">Required for the insertion and/or proper folding and/or complex formation of integral membrane proteins into the membrane. Involved in integration of membrane proteins that insert both dependently and independently of the Sec translocase complex, as well as at least some lipoproteins. Aids folding of multispanning membrane proteins (By similarity).</text>
</comment>
<comment type="subunit">
    <text evidence="1">Interacts with the Sec translocase complex via SecD. Specifically interacts with transmembrane segments of nascent integral membrane proteins during membrane integration (By similarity).</text>
</comment>
<comment type="subcellular location">
    <subcellularLocation>
        <location evidence="1">Cell membrane</location>
        <topology evidence="1">Multi-pass membrane protein</topology>
    </subcellularLocation>
</comment>
<comment type="similarity">
    <text evidence="3">Belongs to the OXA1/ALB3/YidC family. Type 1 subfamily.</text>
</comment>